<evidence type="ECO:0000255" key="1">
    <source>
        <dbReference type="HAMAP-Rule" id="MF_00160"/>
    </source>
</evidence>
<evidence type="ECO:0000305" key="2"/>
<feature type="chain" id="PRO_0000150216" description="Phosphoserine aminotransferase">
    <location>
        <begin position="1"/>
        <end position="364"/>
    </location>
</feature>
<feature type="binding site" evidence="1">
    <location>
        <position position="46"/>
    </location>
    <ligand>
        <name>L-glutamate</name>
        <dbReference type="ChEBI" id="CHEBI:29985"/>
    </ligand>
</feature>
<feature type="binding site" evidence="1">
    <location>
        <begin position="80"/>
        <end position="81"/>
    </location>
    <ligand>
        <name>pyridoxal 5'-phosphate</name>
        <dbReference type="ChEBI" id="CHEBI:597326"/>
    </ligand>
</feature>
<feature type="binding site" evidence="1">
    <location>
        <position position="106"/>
    </location>
    <ligand>
        <name>pyridoxal 5'-phosphate</name>
        <dbReference type="ChEBI" id="CHEBI:597326"/>
    </ligand>
</feature>
<feature type="binding site" evidence="1">
    <location>
        <position position="157"/>
    </location>
    <ligand>
        <name>pyridoxal 5'-phosphate</name>
        <dbReference type="ChEBI" id="CHEBI:597326"/>
    </ligand>
</feature>
<feature type="binding site" evidence="1">
    <location>
        <position position="176"/>
    </location>
    <ligand>
        <name>pyridoxal 5'-phosphate</name>
        <dbReference type="ChEBI" id="CHEBI:597326"/>
    </ligand>
</feature>
<feature type="binding site" evidence="1">
    <location>
        <position position="199"/>
    </location>
    <ligand>
        <name>pyridoxal 5'-phosphate</name>
        <dbReference type="ChEBI" id="CHEBI:597326"/>
    </ligand>
</feature>
<feature type="binding site" evidence="1">
    <location>
        <begin position="241"/>
        <end position="242"/>
    </location>
    <ligand>
        <name>pyridoxal 5'-phosphate</name>
        <dbReference type="ChEBI" id="CHEBI:597326"/>
    </ligand>
</feature>
<feature type="modified residue" description="N6-(pyridoxal phosphate)lysine" evidence="1">
    <location>
        <position position="200"/>
    </location>
</feature>
<gene>
    <name evidence="1" type="primary">serC</name>
    <name type="ordered locus">VP1247</name>
</gene>
<dbReference type="EC" id="2.6.1.52" evidence="1"/>
<dbReference type="EMBL" id="BA000031">
    <property type="protein sequence ID" value="BAC59510.1"/>
    <property type="status" value="ALT_INIT"/>
    <property type="molecule type" value="Genomic_DNA"/>
</dbReference>
<dbReference type="RefSeq" id="NP_797626.1">
    <property type="nucleotide sequence ID" value="NC_004603.1"/>
</dbReference>
<dbReference type="RefSeq" id="WP_005456169.1">
    <property type="nucleotide sequence ID" value="NC_004603.1"/>
</dbReference>
<dbReference type="SMR" id="Q87QA3"/>
<dbReference type="GeneID" id="1188752"/>
<dbReference type="KEGG" id="vpa:VP1247"/>
<dbReference type="PATRIC" id="fig|223926.6.peg.1186"/>
<dbReference type="eggNOG" id="COG1932">
    <property type="taxonomic scope" value="Bacteria"/>
</dbReference>
<dbReference type="HOGENOM" id="CLU_034866_0_2_6"/>
<dbReference type="UniPathway" id="UPA00135">
    <property type="reaction ID" value="UER00197"/>
</dbReference>
<dbReference type="UniPathway" id="UPA00244">
    <property type="reaction ID" value="UER00311"/>
</dbReference>
<dbReference type="Proteomes" id="UP000002493">
    <property type="component" value="Chromosome 1"/>
</dbReference>
<dbReference type="GO" id="GO:0005737">
    <property type="term" value="C:cytoplasm"/>
    <property type="evidence" value="ECO:0007669"/>
    <property type="project" value="UniProtKB-SubCell"/>
</dbReference>
<dbReference type="GO" id="GO:0004648">
    <property type="term" value="F:O-phospho-L-serine:2-oxoglutarate aminotransferase activity"/>
    <property type="evidence" value="ECO:0007669"/>
    <property type="project" value="UniProtKB-UniRule"/>
</dbReference>
<dbReference type="GO" id="GO:0030170">
    <property type="term" value="F:pyridoxal phosphate binding"/>
    <property type="evidence" value="ECO:0007669"/>
    <property type="project" value="UniProtKB-UniRule"/>
</dbReference>
<dbReference type="GO" id="GO:0006564">
    <property type="term" value="P:L-serine biosynthetic process"/>
    <property type="evidence" value="ECO:0007669"/>
    <property type="project" value="UniProtKB-UniRule"/>
</dbReference>
<dbReference type="GO" id="GO:0008615">
    <property type="term" value="P:pyridoxine biosynthetic process"/>
    <property type="evidence" value="ECO:0007669"/>
    <property type="project" value="UniProtKB-UniRule"/>
</dbReference>
<dbReference type="CDD" id="cd00611">
    <property type="entry name" value="PSAT_like"/>
    <property type="match status" value="1"/>
</dbReference>
<dbReference type="FunFam" id="3.40.640.10:FF:000010">
    <property type="entry name" value="Phosphoserine aminotransferase"/>
    <property type="match status" value="1"/>
</dbReference>
<dbReference type="FunFam" id="3.90.1150.10:FF:000006">
    <property type="entry name" value="Phosphoserine aminotransferase"/>
    <property type="match status" value="1"/>
</dbReference>
<dbReference type="Gene3D" id="3.90.1150.10">
    <property type="entry name" value="Aspartate Aminotransferase, domain 1"/>
    <property type="match status" value="1"/>
</dbReference>
<dbReference type="Gene3D" id="3.40.640.10">
    <property type="entry name" value="Type I PLP-dependent aspartate aminotransferase-like (Major domain)"/>
    <property type="match status" value="1"/>
</dbReference>
<dbReference type="HAMAP" id="MF_00160">
    <property type="entry name" value="SerC_aminotrans_5"/>
    <property type="match status" value="1"/>
</dbReference>
<dbReference type="InterPro" id="IPR000192">
    <property type="entry name" value="Aminotrans_V_dom"/>
</dbReference>
<dbReference type="InterPro" id="IPR020578">
    <property type="entry name" value="Aminotrans_V_PyrdxlP_BS"/>
</dbReference>
<dbReference type="InterPro" id="IPR022278">
    <property type="entry name" value="Pser_aminoTfrase"/>
</dbReference>
<dbReference type="InterPro" id="IPR015424">
    <property type="entry name" value="PyrdxlP-dep_Trfase"/>
</dbReference>
<dbReference type="InterPro" id="IPR015421">
    <property type="entry name" value="PyrdxlP-dep_Trfase_major"/>
</dbReference>
<dbReference type="InterPro" id="IPR015422">
    <property type="entry name" value="PyrdxlP-dep_Trfase_small"/>
</dbReference>
<dbReference type="NCBIfam" id="NF003764">
    <property type="entry name" value="PRK05355.1"/>
    <property type="match status" value="1"/>
</dbReference>
<dbReference type="NCBIfam" id="TIGR01364">
    <property type="entry name" value="serC_1"/>
    <property type="match status" value="1"/>
</dbReference>
<dbReference type="PANTHER" id="PTHR43247">
    <property type="entry name" value="PHOSPHOSERINE AMINOTRANSFERASE"/>
    <property type="match status" value="1"/>
</dbReference>
<dbReference type="PANTHER" id="PTHR43247:SF1">
    <property type="entry name" value="PHOSPHOSERINE AMINOTRANSFERASE"/>
    <property type="match status" value="1"/>
</dbReference>
<dbReference type="Pfam" id="PF00266">
    <property type="entry name" value="Aminotran_5"/>
    <property type="match status" value="1"/>
</dbReference>
<dbReference type="PIRSF" id="PIRSF000525">
    <property type="entry name" value="SerC"/>
    <property type="match status" value="1"/>
</dbReference>
<dbReference type="SUPFAM" id="SSF53383">
    <property type="entry name" value="PLP-dependent transferases"/>
    <property type="match status" value="1"/>
</dbReference>
<dbReference type="PROSITE" id="PS00595">
    <property type="entry name" value="AA_TRANSFER_CLASS_5"/>
    <property type="match status" value="1"/>
</dbReference>
<comment type="function">
    <text evidence="1">Catalyzes the reversible conversion of 3-phosphohydroxypyruvate to phosphoserine and of 3-hydroxy-2-oxo-4-phosphonooxybutanoate to phosphohydroxythreonine.</text>
</comment>
<comment type="catalytic activity">
    <reaction evidence="1">
        <text>O-phospho-L-serine + 2-oxoglutarate = 3-phosphooxypyruvate + L-glutamate</text>
        <dbReference type="Rhea" id="RHEA:14329"/>
        <dbReference type="ChEBI" id="CHEBI:16810"/>
        <dbReference type="ChEBI" id="CHEBI:18110"/>
        <dbReference type="ChEBI" id="CHEBI:29985"/>
        <dbReference type="ChEBI" id="CHEBI:57524"/>
        <dbReference type="EC" id="2.6.1.52"/>
    </reaction>
</comment>
<comment type="catalytic activity">
    <reaction evidence="1">
        <text>4-(phosphooxy)-L-threonine + 2-oxoglutarate = (R)-3-hydroxy-2-oxo-4-phosphooxybutanoate + L-glutamate</text>
        <dbReference type="Rhea" id="RHEA:16573"/>
        <dbReference type="ChEBI" id="CHEBI:16810"/>
        <dbReference type="ChEBI" id="CHEBI:29985"/>
        <dbReference type="ChEBI" id="CHEBI:58452"/>
        <dbReference type="ChEBI" id="CHEBI:58538"/>
        <dbReference type="EC" id="2.6.1.52"/>
    </reaction>
</comment>
<comment type="cofactor">
    <cofactor evidence="1">
        <name>pyridoxal 5'-phosphate</name>
        <dbReference type="ChEBI" id="CHEBI:597326"/>
    </cofactor>
    <text evidence="1">Binds 1 pyridoxal phosphate per subunit.</text>
</comment>
<comment type="pathway">
    <text evidence="1">Amino-acid biosynthesis; L-serine biosynthesis; L-serine from 3-phospho-D-glycerate: step 2/3.</text>
</comment>
<comment type="pathway">
    <text evidence="1">Cofactor biosynthesis; pyridoxine 5'-phosphate biosynthesis; pyridoxine 5'-phosphate from D-erythrose 4-phosphate: step 3/5.</text>
</comment>
<comment type="subunit">
    <text evidence="1">Homodimer.</text>
</comment>
<comment type="subcellular location">
    <subcellularLocation>
        <location evidence="1">Cytoplasm</location>
    </subcellularLocation>
</comment>
<comment type="similarity">
    <text evidence="1">Belongs to the class-V pyridoxal-phosphate-dependent aminotransferase family. SerC subfamily.</text>
</comment>
<comment type="sequence caution" evidence="2">
    <conflict type="erroneous initiation">
        <sequence resource="EMBL-CDS" id="BAC59510"/>
    </conflict>
</comment>
<name>SERC_VIBPA</name>
<reference key="1">
    <citation type="journal article" date="2003" name="Lancet">
        <title>Genome sequence of Vibrio parahaemolyticus: a pathogenic mechanism distinct from that of V. cholerae.</title>
        <authorList>
            <person name="Makino K."/>
            <person name="Oshima K."/>
            <person name="Kurokawa K."/>
            <person name="Yokoyama K."/>
            <person name="Uda T."/>
            <person name="Tagomori K."/>
            <person name="Iijima Y."/>
            <person name="Najima M."/>
            <person name="Nakano M."/>
            <person name="Yamashita A."/>
            <person name="Kubota Y."/>
            <person name="Kimura S."/>
            <person name="Yasunaga T."/>
            <person name="Honda T."/>
            <person name="Shinagawa H."/>
            <person name="Hattori M."/>
            <person name="Iida T."/>
        </authorList>
    </citation>
    <scope>NUCLEOTIDE SEQUENCE [LARGE SCALE GENOMIC DNA]</scope>
    <source>
        <strain>RIMD 2210633</strain>
    </source>
</reference>
<accession>Q87QA3</accession>
<protein>
    <recommendedName>
        <fullName evidence="1">Phosphoserine aminotransferase</fullName>
        <ecNumber evidence="1">2.6.1.52</ecNumber>
    </recommendedName>
    <alternativeName>
        <fullName evidence="1">Phosphohydroxythreonine aminotransferase</fullName>
        <shortName evidence="1">PSAT</shortName>
    </alternativeName>
</protein>
<keyword id="KW-0028">Amino-acid biosynthesis</keyword>
<keyword id="KW-0032">Aminotransferase</keyword>
<keyword id="KW-0963">Cytoplasm</keyword>
<keyword id="KW-0663">Pyridoxal phosphate</keyword>
<keyword id="KW-0664">Pyridoxine biosynthesis</keyword>
<keyword id="KW-0718">Serine biosynthesis</keyword>
<keyword id="KW-0808">Transferase</keyword>
<proteinExistence type="inferred from homology"/>
<sequence>MEQNTDNVFNFSAGPAALPKAVMQQAQQELIDWQGLGTSVMEISHRSKEFIKVAQEAEQDLRDLLNIPDNYKVLFCQGGARAQFAAVPLNLLGDAETATYIDGGYWAESAVEEAKKYCEPDVFDAKTEIDGKVAVLPASEWKIAPEAAYVHFCPNETIDGIEINDLPITDKPIVADMSSTILSREIDVSKYGVIYAGAQKNIGPSGIAIAIVRDDLLGMAKQVLPSILDYKVLAEKESMFNTPPTFAWYLSGLVFKWLKAQGGVKSIETVNREKAKLLYDYIDQSDFYRNGVHPSNRSLMNVPFQLAKPELDATFLELADAKGLKALKGHRVVGGMRASIYNAMPLEGVQALVDFMKEFEQNYA</sequence>
<organism>
    <name type="scientific">Vibrio parahaemolyticus serotype O3:K6 (strain RIMD 2210633)</name>
    <dbReference type="NCBI Taxonomy" id="223926"/>
    <lineage>
        <taxon>Bacteria</taxon>
        <taxon>Pseudomonadati</taxon>
        <taxon>Pseudomonadota</taxon>
        <taxon>Gammaproteobacteria</taxon>
        <taxon>Vibrionales</taxon>
        <taxon>Vibrionaceae</taxon>
        <taxon>Vibrio</taxon>
    </lineage>
</organism>